<name>APT_CAEEL</name>
<sequence length="185" mass="20210">MTLPRFDQIRPKIEQHIREVKDFPKKGINFRDIMPLFTNPQLVNELCVVIADHVRHTVGHVDSVAGLEARGFLFGPQVAIQLGVPFVPIRKKGKLPGATIEASYVKEYGEDRVEIQEGAIKNGDIVFLIDDLLATGGTLRAATDLVVKAGGKVGEAFVLIELAPLNGRSKLPDVNLTTLISYDSA</sequence>
<accession>P91455</accession>
<protein>
    <recommendedName>
        <fullName>Adenine phosphoribosyltransferase</fullName>
        <shortName>APRT</shortName>
        <ecNumber>2.4.2.7</ecNumber>
    </recommendedName>
</protein>
<dbReference type="EC" id="2.4.2.7"/>
<dbReference type="EMBL" id="FO080338">
    <property type="protein sequence ID" value="CCD62975.1"/>
    <property type="molecule type" value="Genomic_DNA"/>
</dbReference>
<dbReference type="EMBL" id="AF303266">
    <property type="protein sequence ID" value="AAG50224.1"/>
    <property type="molecule type" value="mRNA"/>
</dbReference>
<dbReference type="PIR" id="T25891">
    <property type="entry name" value="T25891"/>
</dbReference>
<dbReference type="SMR" id="P91455"/>
<dbReference type="BioGRID" id="37689">
    <property type="interactions" value="23"/>
</dbReference>
<dbReference type="FunCoup" id="P91455">
    <property type="interactions" value="1462"/>
</dbReference>
<dbReference type="STRING" id="6239.T19B4.3.1"/>
<dbReference type="PaxDb" id="6239-T19B4.3"/>
<dbReference type="PeptideAtlas" id="P91455"/>
<dbReference type="EnsemblMetazoa" id="T19B4.3.1">
    <property type="protein sequence ID" value="T19B4.3.1"/>
    <property type="gene ID" value="WBGene00020557"/>
</dbReference>
<dbReference type="KEGG" id="cel:CELE_T19B4.3"/>
<dbReference type="UCSC" id="T19B4.3.1">
    <property type="organism name" value="c. elegans"/>
</dbReference>
<dbReference type="AGR" id="WB:WBGene00020557"/>
<dbReference type="CTD" id="172232"/>
<dbReference type="WormBase" id="T19B4.3">
    <property type="protein sequence ID" value="CE13740"/>
    <property type="gene ID" value="WBGene00020557"/>
    <property type="gene designation" value="aprt-1"/>
</dbReference>
<dbReference type="eggNOG" id="KOG1712">
    <property type="taxonomic scope" value="Eukaryota"/>
</dbReference>
<dbReference type="GeneTree" id="ENSGT00390000017259"/>
<dbReference type="HOGENOM" id="CLU_063339_3_2_1"/>
<dbReference type="InParanoid" id="P91455"/>
<dbReference type="OMA" id="QAYDLEY"/>
<dbReference type="OrthoDB" id="363185at2759"/>
<dbReference type="PhylomeDB" id="P91455"/>
<dbReference type="Reactome" id="R-CEL-6798695">
    <property type="pathway name" value="Neutrophil degranulation"/>
</dbReference>
<dbReference type="Reactome" id="R-CEL-74217">
    <property type="pathway name" value="Purine salvage"/>
</dbReference>
<dbReference type="UniPathway" id="UPA00588">
    <property type="reaction ID" value="UER00646"/>
</dbReference>
<dbReference type="PRO" id="PR:P91455"/>
<dbReference type="Proteomes" id="UP000001940">
    <property type="component" value="Chromosome I"/>
</dbReference>
<dbReference type="Bgee" id="WBGene00020557">
    <property type="expression patterns" value="Expressed in larva and 4 other cell types or tissues"/>
</dbReference>
<dbReference type="GO" id="GO:0005737">
    <property type="term" value="C:cytoplasm"/>
    <property type="evidence" value="ECO:0000318"/>
    <property type="project" value="GO_Central"/>
</dbReference>
<dbReference type="GO" id="GO:0002055">
    <property type="term" value="F:adenine binding"/>
    <property type="evidence" value="ECO:0000318"/>
    <property type="project" value="GO_Central"/>
</dbReference>
<dbReference type="GO" id="GO:0003999">
    <property type="term" value="F:adenine phosphoribosyltransferase activity"/>
    <property type="evidence" value="ECO:0000318"/>
    <property type="project" value="GO_Central"/>
</dbReference>
<dbReference type="GO" id="GO:0016208">
    <property type="term" value="F:AMP binding"/>
    <property type="evidence" value="ECO:0000318"/>
    <property type="project" value="GO_Central"/>
</dbReference>
<dbReference type="GO" id="GO:0006168">
    <property type="term" value="P:adenine salvage"/>
    <property type="evidence" value="ECO:0000318"/>
    <property type="project" value="GO_Central"/>
</dbReference>
<dbReference type="GO" id="GO:0044209">
    <property type="term" value="P:AMP salvage"/>
    <property type="evidence" value="ECO:0000318"/>
    <property type="project" value="GO_Central"/>
</dbReference>
<dbReference type="GO" id="GO:0006166">
    <property type="term" value="P:purine ribonucleoside salvage"/>
    <property type="evidence" value="ECO:0007669"/>
    <property type="project" value="UniProtKB-KW"/>
</dbReference>
<dbReference type="CDD" id="cd06223">
    <property type="entry name" value="PRTases_typeI"/>
    <property type="match status" value="1"/>
</dbReference>
<dbReference type="FunFam" id="3.40.50.2020:FF:000021">
    <property type="entry name" value="Adenine phosphoribosyltransferase"/>
    <property type="match status" value="1"/>
</dbReference>
<dbReference type="Gene3D" id="3.40.50.2020">
    <property type="match status" value="1"/>
</dbReference>
<dbReference type="HAMAP" id="MF_00004">
    <property type="entry name" value="Aden_phosphoribosyltr"/>
    <property type="match status" value="1"/>
</dbReference>
<dbReference type="InterPro" id="IPR005764">
    <property type="entry name" value="Ade_phspho_trans"/>
</dbReference>
<dbReference type="InterPro" id="IPR000836">
    <property type="entry name" value="PRibTrfase_dom"/>
</dbReference>
<dbReference type="InterPro" id="IPR029057">
    <property type="entry name" value="PRTase-like"/>
</dbReference>
<dbReference type="InterPro" id="IPR050054">
    <property type="entry name" value="UPRTase/APRTase"/>
</dbReference>
<dbReference type="NCBIfam" id="TIGR01090">
    <property type="entry name" value="apt"/>
    <property type="match status" value="1"/>
</dbReference>
<dbReference type="NCBIfam" id="NF002634">
    <property type="entry name" value="PRK02304.1-3"/>
    <property type="match status" value="1"/>
</dbReference>
<dbReference type="NCBIfam" id="NF002636">
    <property type="entry name" value="PRK02304.1-5"/>
    <property type="match status" value="1"/>
</dbReference>
<dbReference type="PANTHER" id="PTHR32315">
    <property type="entry name" value="ADENINE PHOSPHORIBOSYLTRANSFERASE"/>
    <property type="match status" value="1"/>
</dbReference>
<dbReference type="PANTHER" id="PTHR32315:SF3">
    <property type="entry name" value="ADENINE PHOSPHORIBOSYLTRANSFERASE"/>
    <property type="match status" value="1"/>
</dbReference>
<dbReference type="Pfam" id="PF00156">
    <property type="entry name" value="Pribosyltran"/>
    <property type="match status" value="1"/>
</dbReference>
<dbReference type="SUPFAM" id="SSF53271">
    <property type="entry name" value="PRTase-like"/>
    <property type="match status" value="1"/>
</dbReference>
<organism>
    <name type="scientific">Caenorhabditis elegans</name>
    <dbReference type="NCBI Taxonomy" id="6239"/>
    <lineage>
        <taxon>Eukaryota</taxon>
        <taxon>Metazoa</taxon>
        <taxon>Ecdysozoa</taxon>
        <taxon>Nematoda</taxon>
        <taxon>Chromadorea</taxon>
        <taxon>Rhabditida</taxon>
        <taxon>Rhabditina</taxon>
        <taxon>Rhabditomorpha</taxon>
        <taxon>Rhabditoidea</taxon>
        <taxon>Rhabditidae</taxon>
        <taxon>Peloderinae</taxon>
        <taxon>Caenorhabditis</taxon>
    </lineage>
</organism>
<reference key="1">
    <citation type="journal article" date="1998" name="Science">
        <title>Genome sequence of the nematode C. elegans: a platform for investigating biology.</title>
        <authorList>
            <consortium name="The C. elegans sequencing consortium"/>
        </authorList>
    </citation>
    <scope>NUCLEOTIDE SEQUENCE [LARGE SCALE GENOMIC DNA]</scope>
    <source>
        <strain>Bristol N2</strain>
    </source>
</reference>
<reference key="2">
    <citation type="submission" date="2000-08" db="EMBL/GenBank/DDBJ databases">
        <title>The Caenorhabditis elegans transcriptome project, a complementary view of the genome.</title>
        <authorList>
            <person name="Kohara Y."/>
            <person name="Shin-i T."/>
            <person name="Suzuki Y."/>
            <person name="Sugano S."/>
            <person name="Potdevin M."/>
            <person name="Thierry-Mieg Y."/>
            <person name="Thierry-Mieg D."/>
            <person name="Thierry-Mieg J."/>
        </authorList>
    </citation>
    <scope>NUCLEOTIDE SEQUENCE [LARGE SCALE MRNA]</scope>
    <source>
        <strain>Bristol N2</strain>
    </source>
</reference>
<evidence type="ECO:0000250" key="1"/>
<evidence type="ECO:0000305" key="2"/>
<keyword id="KW-0963">Cytoplasm</keyword>
<keyword id="KW-0328">Glycosyltransferase</keyword>
<keyword id="KW-0660">Purine salvage</keyword>
<keyword id="KW-1185">Reference proteome</keyword>
<keyword id="KW-0808">Transferase</keyword>
<feature type="chain" id="PRO_0000149511" description="Adenine phosphoribosyltransferase">
    <location>
        <begin position="1"/>
        <end position="185"/>
    </location>
</feature>
<gene>
    <name type="primary">aprt-1</name>
    <name type="ORF">T19B4.3</name>
</gene>
<comment type="function">
    <text evidence="1">Catalyzes a salvage reaction resulting in the formation of AMP, that is energically less costly than de novo synthesis.</text>
</comment>
<comment type="catalytic activity">
    <reaction>
        <text>AMP + diphosphate = 5-phospho-alpha-D-ribose 1-diphosphate + adenine</text>
        <dbReference type="Rhea" id="RHEA:16609"/>
        <dbReference type="ChEBI" id="CHEBI:16708"/>
        <dbReference type="ChEBI" id="CHEBI:33019"/>
        <dbReference type="ChEBI" id="CHEBI:58017"/>
        <dbReference type="ChEBI" id="CHEBI:456215"/>
        <dbReference type="EC" id="2.4.2.7"/>
    </reaction>
</comment>
<comment type="pathway">
    <text>Purine metabolism; AMP biosynthesis via salvage pathway; AMP from adenine: step 1/1.</text>
</comment>
<comment type="subcellular location">
    <subcellularLocation>
        <location evidence="1">Cytoplasm</location>
    </subcellularLocation>
</comment>
<comment type="similarity">
    <text evidence="2">Belongs to the purine/pyrimidine phosphoribosyltransferase family.</text>
</comment>
<proteinExistence type="evidence at transcript level"/>